<evidence type="ECO:0000305" key="1"/>
<proteinExistence type="evidence at transcript level"/>
<comment type="function">
    <text>Promotes colloidosmotic lysis by binding to the midgut epithelial cells of many lepidopteran larvae.</text>
</comment>
<comment type="developmental stage">
    <text>The crystal protein is produced during sporulation and is accumulated both as an inclusion and as part of the spore coat.</text>
</comment>
<comment type="miscellaneous">
    <text>Toxic segment of the protein is located in the N-terminus.</text>
</comment>
<comment type="similarity">
    <text evidence="1">Belongs to the delta endotoxin family.</text>
</comment>
<geneLocation type="plasmid">
    <name>68 Kb</name>
</geneLocation>
<organism>
    <name type="scientific">Bacillus thuringiensis subsp. sotto</name>
    <dbReference type="NCBI Taxonomy" id="29340"/>
    <lineage>
        <taxon>Bacteria</taxon>
        <taxon>Bacillati</taxon>
        <taxon>Bacillota</taxon>
        <taxon>Bacilli</taxon>
        <taxon>Bacillales</taxon>
        <taxon>Bacillaceae</taxon>
        <taxon>Bacillus</taxon>
        <taxon>Bacillus cereus group</taxon>
    </lineage>
</organism>
<gene>
    <name type="primary">cry1Aa</name>
    <name type="synonym">cry-1-1</name>
    <name type="synonym">cry1A(a)</name>
    <name type="synonym">cryA</name>
    <name type="synonym">crybns3-1</name>
    <name type="synonym">cryIA(a)</name>
    <name type="synonym">icp</name>
</gene>
<keyword id="KW-0614">Plasmid</keyword>
<keyword id="KW-0749">Sporulation</keyword>
<keyword id="KW-0800">Toxin</keyword>
<keyword id="KW-0843">Virulence</keyword>
<protein>
    <recommendedName>
        <fullName>Pesticidal crystal protein Cry1Aa</fullName>
    </recommendedName>
    <alternativeName>
        <fullName>133 kDa crystal protein</fullName>
    </alternativeName>
    <alternativeName>
        <fullName>Crystaline entomocidal protoxin</fullName>
    </alternativeName>
    <alternativeName>
        <fullName>Insecticidal delta-endotoxin CryIA(a)</fullName>
    </alternativeName>
</protein>
<feature type="chain" id="PRO_0000174020" description="Pesticidal crystal protein Cry1Aa">
    <location>
        <begin position="1"/>
        <end position="934" status="greater than"/>
    </location>
</feature>
<feature type="non-terminal residue">
    <location>
        <position position="934"/>
    </location>
</feature>
<reference key="1">
    <citation type="journal article" date="1985" name="Gene">
        <title>Nucleotide sequence coding for the insecticidal fragment of the Bacillus thuringiensis crystal protein.</title>
        <authorList>
            <person name="Shibano Y."/>
            <person name="Yamagata A."/>
            <person name="Nakamura N."/>
            <person name="Iizuka T."/>
            <person name="Sugisaki H."/>
            <person name="Takanami M."/>
        </authorList>
    </citation>
    <scope>NUCLEOTIDE SEQUENCE [GENOMIC DNA]</scope>
</reference>
<sequence>MDNNPNINECIPYNCLSNPEVEVLGGERIETGYTPIDISLSLTQFLLSEFVPGAGFVLGLVDIIWGIFGPSQWDAFLVQIEQLINQRIEEFARNQAISRLEGLSNLYQIYAESFREWEADPTNPALREEMRIQFNDMNSALTTAIPLFAVQNYQVPLLSVYVQAANLHLSVLRDVSVFGQRWGFDAATINSRYNDLTRLIGNYTDYAVRWYNTGLERVWGPDSRDWVRYNQFRRELTLTVLDIVALFSNYDSRRYPIRTVSQLTREIYTNPVLENFDGSFRGMAQRIEQNIRQPHLMDILNRITIYTDVHRGFNYWSGHQITASPVGFSGPEFAFPLFGNAGNAAPPVLVSLTGLGIFRTLSSPLYRRIILGSGPNNQELFVLDGTEFSFASLTTNLPSTIYRQRGTVDSLDVIPPQDNSVPPRAGFSHRLSHVTMLSQAAGAVYTLRAPTFSWQHRSAEFNNIIPSSQITQIPLTKSTNLGSGTSVVKGPGFTGGDILRRTSPGQISTLRVNITAPLSQRYRVRIRYASTTNLQFHTSIDGRPINQGNFSATMSSGSNLQSGSFRTVGFTTPFNFSNGSSVFTLSAHVFNSGNEVYIDRIEFVPAEVTFEAEYDLERAQKAVNELFTSSNQIGLKTDVTDYHIDQVSNLVECLSDEFCLDEKQELSEKVKHAKRLSDERNLLQDPNFRGINRQLDRGWRGSTDITIQGGDDVFKENYVTLLGTFDECYPTYLYQKIDESKLKAYTRYQLRGYIEDSQDLEIYLIRYNAKHETVNVPGTGSLWPLSAQSPIGKCGEPNRCAPHLEWNPDLDCSCRDGEKCAHHSHHFSLDIDVGCTDLNEDLGVWVIFKIKTQDGHARLGNLEFLEEKPLVGEALARVKRAEKKWRDKREKLEWETNIVYKEAKESVDALFVNSQYDRLQADTNIAMIHAADKR</sequence>
<name>CR1AA_BACTS</name>
<dbReference type="EMBL" id="M10917">
    <property type="protein sequence ID" value="AAA22552.1"/>
    <property type="molecule type" value="Genomic_DNA"/>
</dbReference>
<dbReference type="SMR" id="P0A369"/>
<dbReference type="GO" id="GO:0005102">
    <property type="term" value="F:signaling receptor binding"/>
    <property type="evidence" value="ECO:0007669"/>
    <property type="project" value="InterPro"/>
</dbReference>
<dbReference type="GO" id="GO:0090729">
    <property type="term" value="F:toxin activity"/>
    <property type="evidence" value="ECO:0007669"/>
    <property type="project" value="UniProtKB-KW"/>
</dbReference>
<dbReference type="GO" id="GO:0030435">
    <property type="term" value="P:sporulation resulting in formation of a cellular spore"/>
    <property type="evidence" value="ECO:0007669"/>
    <property type="project" value="UniProtKB-KW"/>
</dbReference>
<dbReference type="GO" id="GO:0001907">
    <property type="term" value="P:symbiont-mediated killing of host cell"/>
    <property type="evidence" value="ECO:0007669"/>
    <property type="project" value="InterPro"/>
</dbReference>
<dbReference type="CDD" id="cd04085">
    <property type="entry name" value="delta_endotoxin_C"/>
    <property type="match status" value="1"/>
</dbReference>
<dbReference type="Gene3D" id="2.60.120.260">
    <property type="entry name" value="Galactose-binding domain-like"/>
    <property type="match status" value="1"/>
</dbReference>
<dbReference type="Gene3D" id="2.100.10.10">
    <property type="entry name" value="Pesticidal crystal protein, central domain"/>
    <property type="match status" value="1"/>
</dbReference>
<dbReference type="Gene3D" id="1.20.190.10">
    <property type="entry name" value="Pesticidal crystal protein, N-terminal domain"/>
    <property type="match status" value="1"/>
</dbReference>
<dbReference type="InterPro" id="IPR041587">
    <property type="entry name" value="Cry_V"/>
</dbReference>
<dbReference type="InterPro" id="IPR008979">
    <property type="entry name" value="Galactose-bd-like_sf"/>
</dbReference>
<dbReference type="InterPro" id="IPR038979">
    <property type="entry name" value="Pest_crys"/>
</dbReference>
<dbReference type="InterPro" id="IPR054544">
    <property type="entry name" value="Pest_crys_Cry1Aa_dom-IV"/>
</dbReference>
<dbReference type="InterPro" id="IPR005638">
    <property type="entry name" value="Pest_crys_dom-III"/>
</dbReference>
<dbReference type="InterPro" id="IPR005639">
    <property type="entry name" value="Pest_crys_dom_I"/>
</dbReference>
<dbReference type="InterPro" id="IPR036716">
    <property type="entry name" value="Pest_crys_N_sf"/>
</dbReference>
<dbReference type="InterPro" id="IPR036399">
    <property type="entry name" value="Pest_cryst_cen_dom_sf"/>
</dbReference>
<dbReference type="InterPro" id="IPR001178">
    <property type="entry name" value="Pest_cryst_dom_II"/>
</dbReference>
<dbReference type="PANTHER" id="PTHR37003">
    <property type="entry name" value="ENDOTOXIN_N DOMAIN-CONTAINING PROTEIN-RELATED"/>
    <property type="match status" value="1"/>
</dbReference>
<dbReference type="PANTHER" id="PTHR37003:SF2">
    <property type="entry name" value="PESTICIDAL CRYSTAL PROTEIN N-TERMINAL DOMAIN-CONTAINING PROTEIN"/>
    <property type="match status" value="1"/>
</dbReference>
<dbReference type="Pfam" id="PF17997">
    <property type="entry name" value="Cry1Ac_D5"/>
    <property type="match status" value="1"/>
</dbReference>
<dbReference type="Pfam" id="PF03944">
    <property type="entry name" value="Endotoxin_C"/>
    <property type="match status" value="1"/>
</dbReference>
<dbReference type="Pfam" id="PF18449">
    <property type="entry name" value="Endotoxin_C2"/>
    <property type="match status" value="1"/>
</dbReference>
<dbReference type="Pfam" id="PF00555">
    <property type="entry name" value="Endotoxin_M"/>
    <property type="match status" value="1"/>
</dbReference>
<dbReference type="Pfam" id="PF03945">
    <property type="entry name" value="Endotoxin_N"/>
    <property type="match status" value="1"/>
</dbReference>
<dbReference type="SUPFAM" id="SSF51096">
    <property type="entry name" value="delta-Endotoxin (insectocide), middle domain"/>
    <property type="match status" value="1"/>
</dbReference>
<dbReference type="SUPFAM" id="SSF56849">
    <property type="entry name" value="delta-Endotoxin (insectocide), N-terminal domain"/>
    <property type="match status" value="1"/>
</dbReference>
<dbReference type="SUPFAM" id="SSF49785">
    <property type="entry name" value="Galactose-binding domain-like"/>
    <property type="match status" value="1"/>
</dbReference>
<accession>P0A369</accession>
<accession>P02965</accession>
<accession>P09664</accession>
<accession>P09665</accession>
<accession>P16478</accession>
<accession>Q9RED5</accession>